<proteinExistence type="inferred from homology"/>
<sequence>MTTSPLHTRFGGIAELRAALAGRQVSARELARSALDAAQAAGDLNTFLHIDPDLTLAQADAADAALAAGTAGPLAGVPIAHKDAFVTRGWRTTAGSKMLEGYASPFDATVVQRLQAAGAVSLGKLNCDEFAMGSANENSAYGPVRNPWDPNAVPGGSSGGSAAAVAARLVAAATGTDTGGSVRQPAALCGVSGIKPTYGTVSRYGIVAFGSSLDQAGPLAPSSRDLLELLDPMSGFDPQDATSLETCDGAPNAPGRIRAAYDAAQAACDAAGSQPLKGLRIGVPQEYFGAGLAPDVAAAVEAALAQFEALGAQRVAVSLPRTELAIPAYYVIAPAEASSNLARYDGVRYGHRAAEYADLNQMIARSRAEGFGDEVKRRILIGTYVLSHGYYDAYYLQAQRVRRLIAQDFQRAYAGQCDVIMGPVAPTVAKNIGDNRDDPTADWLADVYTLGVSLAGLPAMSIPAGFGNGGRPVGLQIIGNYFDEGRLLAIADRYQQVTDWHRRVPGQQGTEQ</sequence>
<feature type="chain" id="PRO_1000095109" description="Glutamyl-tRNA(Gln) amidotransferase subunit A">
    <location>
        <begin position="1"/>
        <end position="512"/>
    </location>
</feature>
<feature type="active site" description="Charge relay system" evidence="1">
    <location>
        <position position="82"/>
    </location>
</feature>
<feature type="active site" description="Charge relay system" evidence="1">
    <location>
        <position position="157"/>
    </location>
</feature>
<feature type="active site" description="Acyl-ester intermediate" evidence="1">
    <location>
        <position position="181"/>
    </location>
</feature>
<name>GATA_BORPD</name>
<gene>
    <name evidence="1" type="primary">gatA</name>
    <name type="ordered locus">Bpet0425</name>
</gene>
<dbReference type="EC" id="6.3.5.7" evidence="1"/>
<dbReference type="EMBL" id="AM902716">
    <property type="protein sequence ID" value="CAP40757.1"/>
    <property type="molecule type" value="Genomic_DNA"/>
</dbReference>
<dbReference type="SMR" id="A9I0H5"/>
<dbReference type="STRING" id="94624.Bpet0425"/>
<dbReference type="KEGG" id="bpt:Bpet0425"/>
<dbReference type="eggNOG" id="COG0154">
    <property type="taxonomic scope" value="Bacteria"/>
</dbReference>
<dbReference type="Proteomes" id="UP000001225">
    <property type="component" value="Chromosome"/>
</dbReference>
<dbReference type="GO" id="GO:0030956">
    <property type="term" value="C:glutamyl-tRNA(Gln) amidotransferase complex"/>
    <property type="evidence" value="ECO:0007669"/>
    <property type="project" value="InterPro"/>
</dbReference>
<dbReference type="GO" id="GO:0005524">
    <property type="term" value="F:ATP binding"/>
    <property type="evidence" value="ECO:0007669"/>
    <property type="project" value="UniProtKB-KW"/>
</dbReference>
<dbReference type="GO" id="GO:0050567">
    <property type="term" value="F:glutaminyl-tRNA synthase (glutamine-hydrolyzing) activity"/>
    <property type="evidence" value="ECO:0007669"/>
    <property type="project" value="UniProtKB-UniRule"/>
</dbReference>
<dbReference type="GO" id="GO:0006412">
    <property type="term" value="P:translation"/>
    <property type="evidence" value="ECO:0007669"/>
    <property type="project" value="UniProtKB-UniRule"/>
</dbReference>
<dbReference type="Gene3D" id="3.90.1300.10">
    <property type="entry name" value="Amidase signature (AS) domain"/>
    <property type="match status" value="1"/>
</dbReference>
<dbReference type="HAMAP" id="MF_00120">
    <property type="entry name" value="GatA"/>
    <property type="match status" value="1"/>
</dbReference>
<dbReference type="InterPro" id="IPR000120">
    <property type="entry name" value="Amidase"/>
</dbReference>
<dbReference type="InterPro" id="IPR020556">
    <property type="entry name" value="Amidase_CS"/>
</dbReference>
<dbReference type="InterPro" id="IPR023631">
    <property type="entry name" value="Amidase_dom"/>
</dbReference>
<dbReference type="InterPro" id="IPR036928">
    <property type="entry name" value="AS_sf"/>
</dbReference>
<dbReference type="InterPro" id="IPR004412">
    <property type="entry name" value="GatA"/>
</dbReference>
<dbReference type="NCBIfam" id="TIGR00132">
    <property type="entry name" value="gatA"/>
    <property type="match status" value="1"/>
</dbReference>
<dbReference type="PANTHER" id="PTHR11895:SF151">
    <property type="entry name" value="GLUTAMYL-TRNA(GLN) AMIDOTRANSFERASE SUBUNIT A"/>
    <property type="match status" value="1"/>
</dbReference>
<dbReference type="PANTHER" id="PTHR11895">
    <property type="entry name" value="TRANSAMIDASE"/>
    <property type="match status" value="1"/>
</dbReference>
<dbReference type="Pfam" id="PF01425">
    <property type="entry name" value="Amidase"/>
    <property type="match status" value="1"/>
</dbReference>
<dbReference type="SUPFAM" id="SSF75304">
    <property type="entry name" value="Amidase signature (AS) enzymes"/>
    <property type="match status" value="1"/>
</dbReference>
<dbReference type="PROSITE" id="PS00571">
    <property type="entry name" value="AMIDASES"/>
    <property type="match status" value="1"/>
</dbReference>
<protein>
    <recommendedName>
        <fullName evidence="1">Glutamyl-tRNA(Gln) amidotransferase subunit A</fullName>
        <shortName evidence="1">Glu-ADT subunit A</shortName>
        <ecNumber evidence="1">6.3.5.7</ecNumber>
    </recommendedName>
</protein>
<comment type="function">
    <text evidence="1">Allows the formation of correctly charged Gln-tRNA(Gln) through the transamidation of misacylated Glu-tRNA(Gln) in organisms which lack glutaminyl-tRNA synthetase. The reaction takes place in the presence of glutamine and ATP through an activated gamma-phospho-Glu-tRNA(Gln).</text>
</comment>
<comment type="catalytic activity">
    <reaction evidence="1">
        <text>L-glutamyl-tRNA(Gln) + L-glutamine + ATP + H2O = L-glutaminyl-tRNA(Gln) + L-glutamate + ADP + phosphate + H(+)</text>
        <dbReference type="Rhea" id="RHEA:17521"/>
        <dbReference type="Rhea" id="RHEA-COMP:9681"/>
        <dbReference type="Rhea" id="RHEA-COMP:9684"/>
        <dbReference type="ChEBI" id="CHEBI:15377"/>
        <dbReference type="ChEBI" id="CHEBI:15378"/>
        <dbReference type="ChEBI" id="CHEBI:29985"/>
        <dbReference type="ChEBI" id="CHEBI:30616"/>
        <dbReference type="ChEBI" id="CHEBI:43474"/>
        <dbReference type="ChEBI" id="CHEBI:58359"/>
        <dbReference type="ChEBI" id="CHEBI:78520"/>
        <dbReference type="ChEBI" id="CHEBI:78521"/>
        <dbReference type="ChEBI" id="CHEBI:456216"/>
        <dbReference type="EC" id="6.3.5.7"/>
    </reaction>
</comment>
<comment type="subunit">
    <text evidence="1">Heterotrimer of A, B and C subunits.</text>
</comment>
<comment type="similarity">
    <text evidence="1">Belongs to the amidase family. GatA subfamily.</text>
</comment>
<keyword id="KW-0067">ATP-binding</keyword>
<keyword id="KW-0436">Ligase</keyword>
<keyword id="KW-0547">Nucleotide-binding</keyword>
<keyword id="KW-0648">Protein biosynthesis</keyword>
<reference key="1">
    <citation type="journal article" date="2008" name="BMC Genomics">
        <title>The missing link: Bordetella petrii is endowed with both the metabolic versatility of environmental bacteria and virulence traits of pathogenic Bordetellae.</title>
        <authorList>
            <person name="Gross R."/>
            <person name="Guzman C.A."/>
            <person name="Sebaihia M."/>
            <person name="Martin dos Santos V.A.P."/>
            <person name="Pieper D.H."/>
            <person name="Koebnik R."/>
            <person name="Lechner M."/>
            <person name="Bartels D."/>
            <person name="Buhrmester J."/>
            <person name="Choudhuri J.V."/>
            <person name="Ebensen T."/>
            <person name="Gaigalat L."/>
            <person name="Herrmann S."/>
            <person name="Khachane A.N."/>
            <person name="Larisch C."/>
            <person name="Link S."/>
            <person name="Linke B."/>
            <person name="Meyer F."/>
            <person name="Mormann S."/>
            <person name="Nakunst D."/>
            <person name="Rueckert C."/>
            <person name="Schneiker-Bekel S."/>
            <person name="Schulze K."/>
            <person name="Voerholter F.-J."/>
            <person name="Yevsa T."/>
            <person name="Engle J.T."/>
            <person name="Goldman W.E."/>
            <person name="Puehler A."/>
            <person name="Goebel U.B."/>
            <person name="Goesmann A."/>
            <person name="Bloecker H."/>
            <person name="Kaiser O."/>
            <person name="Martinez-Arias R."/>
        </authorList>
    </citation>
    <scope>NUCLEOTIDE SEQUENCE [LARGE SCALE GENOMIC DNA]</scope>
    <source>
        <strain>ATCC BAA-461 / DSM 12804 / CCUG 43448</strain>
    </source>
</reference>
<evidence type="ECO:0000255" key="1">
    <source>
        <dbReference type="HAMAP-Rule" id="MF_00120"/>
    </source>
</evidence>
<accession>A9I0H5</accession>
<organism>
    <name type="scientific">Bordetella petrii (strain ATCC BAA-461 / DSM 12804 / CCUG 43448)</name>
    <dbReference type="NCBI Taxonomy" id="340100"/>
    <lineage>
        <taxon>Bacteria</taxon>
        <taxon>Pseudomonadati</taxon>
        <taxon>Pseudomonadota</taxon>
        <taxon>Betaproteobacteria</taxon>
        <taxon>Burkholderiales</taxon>
        <taxon>Alcaligenaceae</taxon>
        <taxon>Bordetella</taxon>
    </lineage>
</organism>